<evidence type="ECO:0000250" key="1"/>
<evidence type="ECO:0000255" key="2"/>
<evidence type="ECO:0000305" key="3"/>
<accession>Q5U4V1</accession>
<gene>
    <name type="primary">rhcg</name>
</gene>
<feature type="chain" id="PRO_0000283592" description="Ammonium transporter Rh type C">
    <location>
        <begin position="1"/>
        <end position="473"/>
    </location>
</feature>
<feature type="topological domain" description="Cytoplasmic" evidence="2">
    <location>
        <begin position="1"/>
        <end position="9"/>
    </location>
</feature>
<feature type="transmembrane region" description="Helical" evidence="2">
    <location>
        <begin position="10"/>
        <end position="30"/>
    </location>
</feature>
<feature type="topological domain" description="Extracellular" evidence="2">
    <location>
        <begin position="31"/>
        <end position="61"/>
    </location>
</feature>
<feature type="transmembrane region" description="Helical" evidence="2">
    <location>
        <begin position="62"/>
        <end position="82"/>
    </location>
</feature>
<feature type="topological domain" description="Cytoplasmic" evidence="2">
    <location>
        <begin position="83"/>
        <end position="86"/>
    </location>
</feature>
<feature type="transmembrane region" description="Helical" evidence="2">
    <location>
        <begin position="87"/>
        <end position="107"/>
    </location>
</feature>
<feature type="topological domain" description="Extracellular" evidence="2">
    <location>
        <begin position="108"/>
        <end position="125"/>
    </location>
</feature>
<feature type="transmembrane region" description="Helical" evidence="2">
    <location>
        <begin position="126"/>
        <end position="145"/>
    </location>
</feature>
<feature type="topological domain" description="Cytoplasmic" evidence="2">
    <location>
        <begin position="146"/>
        <end position="151"/>
    </location>
</feature>
<feature type="transmembrane region" description="Helical" evidence="2">
    <location>
        <begin position="152"/>
        <end position="171"/>
    </location>
</feature>
<feature type="topological domain" description="Extracellular" evidence="2">
    <location>
        <begin position="172"/>
        <end position="179"/>
    </location>
</feature>
<feature type="transmembrane region" description="Helical" evidence="2">
    <location>
        <begin position="180"/>
        <end position="200"/>
    </location>
</feature>
<feature type="topological domain" description="Cytoplasmic" evidence="2">
    <location>
        <begin position="201"/>
        <end position="219"/>
    </location>
</feature>
<feature type="transmembrane region" description="Helical" evidence="2">
    <location>
        <begin position="220"/>
        <end position="240"/>
    </location>
</feature>
<feature type="topological domain" description="Extracellular" evidence="2">
    <location>
        <begin position="241"/>
        <end position="251"/>
    </location>
</feature>
<feature type="transmembrane region" description="Helical" evidence="2">
    <location>
        <begin position="252"/>
        <end position="272"/>
    </location>
</feature>
<feature type="topological domain" description="Cytoplasmic" evidence="2">
    <location>
        <begin position="273"/>
        <end position="285"/>
    </location>
</feature>
<feature type="transmembrane region" description="Helical" evidence="2">
    <location>
        <begin position="286"/>
        <end position="306"/>
    </location>
</feature>
<feature type="topological domain" description="Extracellular" evidence="2">
    <location>
        <position position="307"/>
    </location>
</feature>
<feature type="transmembrane region" description="Helical" evidence="2">
    <location>
        <begin position="308"/>
        <end position="328"/>
    </location>
</feature>
<feature type="topological domain" description="Cytoplasmic" evidence="2">
    <location>
        <begin position="329"/>
        <end position="343"/>
    </location>
</feature>
<feature type="transmembrane region" description="Helical" evidence="2">
    <location>
        <begin position="344"/>
        <end position="364"/>
    </location>
</feature>
<feature type="topological domain" description="Extracellular" evidence="2">
    <location>
        <begin position="365"/>
        <end position="396"/>
    </location>
</feature>
<feature type="transmembrane region" description="Helical" evidence="2">
    <location>
        <begin position="397"/>
        <end position="417"/>
    </location>
</feature>
<feature type="topological domain" description="Cytoplasmic" evidence="2">
    <location>
        <begin position="418"/>
        <end position="473"/>
    </location>
</feature>
<feature type="glycosylation site" description="N-linked (GlcNAc...) asparagine" evidence="2">
    <location>
        <position position="48"/>
    </location>
</feature>
<protein>
    <recommendedName>
        <fullName>Ammonium transporter Rh type C</fullName>
    </recommendedName>
    <alternativeName>
        <fullName>Rhesus blood group family type C glycoprotein</fullName>
        <shortName>Rh family type C glycoprotein</shortName>
        <shortName>Rh type C glycoprotein</shortName>
    </alternativeName>
</protein>
<comment type="function">
    <text evidence="1">Functions as an ammonia transporter.</text>
</comment>
<comment type="subunit">
    <text>Homotrimer.</text>
</comment>
<comment type="subcellular location">
    <subcellularLocation>
        <location evidence="1">Apical cell membrane</location>
        <topology evidence="1">Multi-pass membrane protein</topology>
    </subcellularLocation>
</comment>
<comment type="similarity">
    <text evidence="3">Belongs to the ammonium transporter (TC 2.A.49) family. Rh subfamily.</text>
</comment>
<organism>
    <name type="scientific">Xenopus laevis</name>
    <name type="common">African clawed frog</name>
    <dbReference type="NCBI Taxonomy" id="8355"/>
    <lineage>
        <taxon>Eukaryota</taxon>
        <taxon>Metazoa</taxon>
        <taxon>Chordata</taxon>
        <taxon>Craniata</taxon>
        <taxon>Vertebrata</taxon>
        <taxon>Euteleostomi</taxon>
        <taxon>Amphibia</taxon>
        <taxon>Batrachia</taxon>
        <taxon>Anura</taxon>
        <taxon>Pipoidea</taxon>
        <taxon>Pipidae</taxon>
        <taxon>Xenopodinae</taxon>
        <taxon>Xenopus</taxon>
        <taxon>Xenopus</taxon>
    </lineage>
</organism>
<name>RHCG_XENLA</name>
<reference key="1">
    <citation type="submission" date="2004-10" db="EMBL/GenBank/DDBJ databases">
        <authorList>
            <consortium name="NIH - Xenopus Gene Collection (XGC) project"/>
        </authorList>
    </citation>
    <scope>NUCLEOTIDE SEQUENCE [LARGE SCALE MRNA]</scope>
    <source>
        <tissue>Kidney</tissue>
    </source>
</reference>
<sequence length="473" mass="52432">MLRNSNMRWRLPLICFVWEIAMIVLFGIFVRYNDEADPHWPIFMKHENITSDIENDFYFRYPSFQDVHVMIFVGFGFLMTFLQRYGFGSVAFNFLLAAFGIQWALLMQGWFHTFVNGKILIGVESLINADFCVGSVCIAFGGVLGKVSPVQIMLMTLFQVTLFAVNEWILLNKLHVIDAGGSMTIHTFGAYFGLTVAWILSRPKLKQNNDKEGSTYISDLFSMIGTLFLWMYWPSFNSAISYHGDAQHRAAINTYCSLAACVLTTVAISSVVNKKGKLEMVHIQNATLAGGVAVGTAAEMMLTPYGSLIVGFICGIVSTLGFTYLSPILSNKLRLHDTCGIHNLHAIPGLIGGIVGAVTAACATEGVYTAEGLKKMFHFEGEYADRTPSIQGIYQAAGIGVSLAFGIVGGTVVGCILKLPIWGDPSDENCFDDDVYWELREEDEEEHLGAANQYITHLPENFKLPDRTEISFK</sequence>
<dbReference type="EMBL" id="BC084943">
    <property type="protein sequence ID" value="AAH84943.1"/>
    <property type="molecule type" value="mRNA"/>
</dbReference>
<dbReference type="SMR" id="Q5U4V1"/>
<dbReference type="GlyCosmos" id="Q5U4V1">
    <property type="glycosylation" value="1 site, No reported glycans"/>
</dbReference>
<dbReference type="Proteomes" id="UP000186698">
    <property type="component" value="Unplaced"/>
</dbReference>
<dbReference type="GO" id="GO:0016324">
    <property type="term" value="C:apical plasma membrane"/>
    <property type="evidence" value="ECO:0000318"/>
    <property type="project" value="GO_Central"/>
</dbReference>
<dbReference type="GO" id="GO:0016323">
    <property type="term" value="C:basolateral plasma membrane"/>
    <property type="evidence" value="ECO:0000318"/>
    <property type="project" value="GO_Central"/>
</dbReference>
<dbReference type="GO" id="GO:0005886">
    <property type="term" value="C:plasma membrane"/>
    <property type="evidence" value="ECO:0000318"/>
    <property type="project" value="GO_Central"/>
</dbReference>
<dbReference type="GO" id="GO:0008519">
    <property type="term" value="F:ammonium channel activity"/>
    <property type="evidence" value="ECO:0000318"/>
    <property type="project" value="GO_Central"/>
</dbReference>
<dbReference type="GO" id="GO:0097272">
    <property type="term" value="P:ammonium homeostasis"/>
    <property type="evidence" value="ECO:0000318"/>
    <property type="project" value="GO_Central"/>
</dbReference>
<dbReference type="GO" id="GO:0072488">
    <property type="term" value="P:ammonium transmembrane transport"/>
    <property type="evidence" value="ECO:0000318"/>
    <property type="project" value="GO_Central"/>
</dbReference>
<dbReference type="FunFam" id="1.10.3430.10:FF:000001">
    <property type="entry name" value="Ammonium transporter Rh type C"/>
    <property type="match status" value="1"/>
</dbReference>
<dbReference type="Gene3D" id="1.10.3430.10">
    <property type="entry name" value="Ammonium transporter AmtB like domains"/>
    <property type="match status" value="1"/>
</dbReference>
<dbReference type="InterPro" id="IPR029020">
    <property type="entry name" value="Ammonium/urea_transptr"/>
</dbReference>
<dbReference type="InterPro" id="IPR024041">
    <property type="entry name" value="NH4_transpt_AmtB-like_dom"/>
</dbReference>
<dbReference type="InterPro" id="IPR002229">
    <property type="entry name" value="RhesusRHD"/>
</dbReference>
<dbReference type="PANTHER" id="PTHR11730">
    <property type="entry name" value="AMMONIUM TRANSPORTER"/>
    <property type="match status" value="1"/>
</dbReference>
<dbReference type="PANTHER" id="PTHR11730:SF30">
    <property type="entry name" value="AMMONIUM TRANSPORTER RH TYPE C"/>
    <property type="match status" value="1"/>
</dbReference>
<dbReference type="Pfam" id="PF00909">
    <property type="entry name" value="Ammonium_transp"/>
    <property type="match status" value="1"/>
</dbReference>
<dbReference type="PRINTS" id="PR00342">
    <property type="entry name" value="RHESUSRHD"/>
</dbReference>
<dbReference type="SUPFAM" id="SSF111352">
    <property type="entry name" value="Ammonium transporter"/>
    <property type="match status" value="1"/>
</dbReference>
<keyword id="KW-0924">Ammonia transport</keyword>
<keyword id="KW-1003">Cell membrane</keyword>
<keyword id="KW-0325">Glycoprotein</keyword>
<keyword id="KW-0472">Membrane</keyword>
<keyword id="KW-1185">Reference proteome</keyword>
<keyword id="KW-0812">Transmembrane</keyword>
<keyword id="KW-1133">Transmembrane helix</keyword>
<keyword id="KW-0813">Transport</keyword>
<proteinExistence type="evidence at transcript level"/>